<feature type="chain" id="PRO_0000124485" description="Small ribosomal subunit protein uS7cz/uS7cy">
    <location>
        <begin position="1"/>
        <end position="155"/>
    </location>
</feature>
<evidence type="ECO:0000250" key="1"/>
<evidence type="ECO:0000255" key="2">
    <source>
        <dbReference type="HAMAP-Rule" id="MF_00480"/>
    </source>
</evidence>
<evidence type="ECO:0000305" key="3"/>
<name>RR7_PANGI</name>
<gene>
    <name type="primary">rps7-A</name>
    <name type="ORF">PSC0984</name>
</gene>
<gene>
    <name type="primary">rps7-B</name>
    <name type="ORF">PSC1434</name>
</gene>
<keyword id="KW-0150">Chloroplast</keyword>
<keyword id="KW-0934">Plastid</keyword>
<keyword id="KW-0687">Ribonucleoprotein</keyword>
<keyword id="KW-0689">Ribosomal protein</keyword>
<keyword id="KW-0694">RNA-binding</keyword>
<keyword id="KW-0699">rRNA-binding</keyword>
<reference key="1">
    <citation type="journal article" date="2004" name="DNA Res.">
        <title>Complete chloroplast genome sequence from Korea ginseng (Panax schinseng Nees) and comparative analysis of sequence evolution among 17 vascular plants.</title>
        <authorList>
            <person name="Kim K.-J."/>
            <person name="Lee H.-L."/>
        </authorList>
    </citation>
    <scope>NUCLEOTIDE SEQUENCE [LARGE SCALE GENOMIC DNA]</scope>
</reference>
<dbReference type="EMBL" id="AY582139">
    <property type="protein sequence ID" value="AAT98555.1"/>
    <property type="molecule type" value="Genomic_DNA"/>
</dbReference>
<dbReference type="EMBL" id="AY582139">
    <property type="protein sequence ID" value="AAT98570.1"/>
    <property type="molecule type" value="Genomic_DNA"/>
</dbReference>
<dbReference type="SMR" id="Q68RU7"/>
<dbReference type="GO" id="GO:0009507">
    <property type="term" value="C:chloroplast"/>
    <property type="evidence" value="ECO:0007669"/>
    <property type="project" value="UniProtKB-SubCell"/>
</dbReference>
<dbReference type="GO" id="GO:0015935">
    <property type="term" value="C:small ribosomal subunit"/>
    <property type="evidence" value="ECO:0007669"/>
    <property type="project" value="InterPro"/>
</dbReference>
<dbReference type="GO" id="GO:0019843">
    <property type="term" value="F:rRNA binding"/>
    <property type="evidence" value="ECO:0007669"/>
    <property type="project" value="UniProtKB-UniRule"/>
</dbReference>
<dbReference type="GO" id="GO:0003735">
    <property type="term" value="F:structural constituent of ribosome"/>
    <property type="evidence" value="ECO:0007669"/>
    <property type="project" value="InterPro"/>
</dbReference>
<dbReference type="GO" id="GO:0006412">
    <property type="term" value="P:translation"/>
    <property type="evidence" value="ECO:0007669"/>
    <property type="project" value="UniProtKB-UniRule"/>
</dbReference>
<dbReference type="CDD" id="cd14871">
    <property type="entry name" value="uS7_Chloroplast"/>
    <property type="match status" value="1"/>
</dbReference>
<dbReference type="FunFam" id="1.10.455.10:FF:000001">
    <property type="entry name" value="30S ribosomal protein S7"/>
    <property type="match status" value="1"/>
</dbReference>
<dbReference type="Gene3D" id="1.10.455.10">
    <property type="entry name" value="Ribosomal protein S7 domain"/>
    <property type="match status" value="1"/>
</dbReference>
<dbReference type="HAMAP" id="MF_00480_B">
    <property type="entry name" value="Ribosomal_uS7_B"/>
    <property type="match status" value="1"/>
</dbReference>
<dbReference type="InterPro" id="IPR000235">
    <property type="entry name" value="Ribosomal_uS7"/>
</dbReference>
<dbReference type="InterPro" id="IPR005717">
    <property type="entry name" value="Ribosomal_uS7_bac/org-type"/>
</dbReference>
<dbReference type="InterPro" id="IPR020606">
    <property type="entry name" value="Ribosomal_uS7_CS"/>
</dbReference>
<dbReference type="InterPro" id="IPR023798">
    <property type="entry name" value="Ribosomal_uS7_dom"/>
</dbReference>
<dbReference type="InterPro" id="IPR036823">
    <property type="entry name" value="Ribosomal_uS7_dom_sf"/>
</dbReference>
<dbReference type="NCBIfam" id="TIGR01029">
    <property type="entry name" value="rpsG_bact"/>
    <property type="match status" value="1"/>
</dbReference>
<dbReference type="PANTHER" id="PTHR11205">
    <property type="entry name" value="RIBOSOMAL PROTEIN S7"/>
    <property type="match status" value="1"/>
</dbReference>
<dbReference type="Pfam" id="PF00177">
    <property type="entry name" value="Ribosomal_S7"/>
    <property type="match status" value="1"/>
</dbReference>
<dbReference type="PIRSF" id="PIRSF002122">
    <property type="entry name" value="RPS7p_RPS7a_RPS5e_RPS7o"/>
    <property type="match status" value="1"/>
</dbReference>
<dbReference type="SUPFAM" id="SSF47973">
    <property type="entry name" value="Ribosomal protein S7"/>
    <property type="match status" value="1"/>
</dbReference>
<dbReference type="PROSITE" id="PS00052">
    <property type="entry name" value="RIBOSOMAL_S7"/>
    <property type="match status" value="1"/>
</dbReference>
<organism>
    <name type="scientific">Panax ginseng</name>
    <name type="common">Korean ginseng</name>
    <dbReference type="NCBI Taxonomy" id="4054"/>
    <lineage>
        <taxon>Eukaryota</taxon>
        <taxon>Viridiplantae</taxon>
        <taxon>Streptophyta</taxon>
        <taxon>Embryophyta</taxon>
        <taxon>Tracheophyta</taxon>
        <taxon>Spermatophyta</taxon>
        <taxon>Magnoliopsida</taxon>
        <taxon>eudicotyledons</taxon>
        <taxon>Gunneridae</taxon>
        <taxon>Pentapetalae</taxon>
        <taxon>asterids</taxon>
        <taxon>campanulids</taxon>
        <taxon>Apiales</taxon>
        <taxon>Araliaceae</taxon>
        <taxon>Panax</taxon>
    </lineage>
</organism>
<sequence length="155" mass="17357">MSRRGTAEEKTAKSDPIYRNRLVNMLVNRILKHGKKSLAYQIIYRAVKKIQQKTETNPLSVLRQAIRGVTPDIAVKARRVGGSTHQVPIEIGSTQGKALAIRWLLAASRKRPGRNMAFKLSSELVDAAKGSGDAIRKKEETHRMAEANRAFAHFR</sequence>
<geneLocation type="chloroplast"/>
<protein>
    <recommendedName>
        <fullName evidence="2">Small ribosomal subunit protein uS7cz/uS7cy</fullName>
    </recommendedName>
    <alternativeName>
        <fullName>30S ribosomal protein S7, chloroplastic</fullName>
    </alternativeName>
</protein>
<comment type="function">
    <text evidence="1">One of the primary rRNA binding proteins, it binds directly to 16S rRNA where it nucleates assembly of the head domain of the 30S subunit.</text>
</comment>
<comment type="subunit">
    <text>Part of the 30S ribosomal subunit.</text>
</comment>
<comment type="subcellular location">
    <subcellularLocation>
        <location>Plastid</location>
        <location>Chloroplast</location>
    </subcellularLocation>
</comment>
<comment type="similarity">
    <text evidence="3">Belongs to the universal ribosomal protein uS7 family.</text>
</comment>
<accession>Q68RU7</accession>
<proteinExistence type="inferred from homology"/>